<dbReference type="EC" id="2.7.7.65" evidence="4"/>
<dbReference type="EMBL" id="AE017226">
    <property type="protein sequence ID" value="AAS10623.1"/>
    <property type="molecule type" value="Genomic_DNA"/>
</dbReference>
<dbReference type="RefSeq" id="NP_970742.1">
    <property type="nucleotide sequence ID" value="NC_002967.9"/>
</dbReference>
<dbReference type="SMR" id="Q73RG3"/>
<dbReference type="STRING" id="243275.TDE_0125"/>
<dbReference type="PaxDb" id="243275-TDE_0125"/>
<dbReference type="KEGG" id="tde:TDE_0125"/>
<dbReference type="PATRIC" id="fig|243275.7.peg.125"/>
<dbReference type="eggNOG" id="COG3706">
    <property type="taxonomic scope" value="Bacteria"/>
</dbReference>
<dbReference type="HOGENOM" id="CLU_000445_11_24_12"/>
<dbReference type="OrthoDB" id="9779586at2"/>
<dbReference type="Proteomes" id="UP000008212">
    <property type="component" value="Chromosome"/>
</dbReference>
<dbReference type="GO" id="GO:0005737">
    <property type="term" value="C:cytoplasm"/>
    <property type="evidence" value="ECO:0007669"/>
    <property type="project" value="UniProtKB-SubCell"/>
</dbReference>
<dbReference type="GO" id="GO:0005886">
    <property type="term" value="C:plasma membrane"/>
    <property type="evidence" value="ECO:0007669"/>
    <property type="project" value="TreeGrafter"/>
</dbReference>
<dbReference type="GO" id="GO:0052621">
    <property type="term" value="F:diguanylate cyclase activity"/>
    <property type="evidence" value="ECO:0007669"/>
    <property type="project" value="InterPro"/>
</dbReference>
<dbReference type="GO" id="GO:0005525">
    <property type="term" value="F:GTP binding"/>
    <property type="evidence" value="ECO:0007669"/>
    <property type="project" value="UniProtKB-KW"/>
</dbReference>
<dbReference type="GO" id="GO:0046872">
    <property type="term" value="F:metal ion binding"/>
    <property type="evidence" value="ECO:0007669"/>
    <property type="project" value="UniProtKB-KW"/>
</dbReference>
<dbReference type="GO" id="GO:0043709">
    <property type="term" value="P:cell adhesion involved in single-species biofilm formation"/>
    <property type="evidence" value="ECO:0007669"/>
    <property type="project" value="TreeGrafter"/>
</dbReference>
<dbReference type="GO" id="GO:1902201">
    <property type="term" value="P:negative regulation of bacterial-type flagellum-dependent cell motility"/>
    <property type="evidence" value="ECO:0007669"/>
    <property type="project" value="TreeGrafter"/>
</dbReference>
<dbReference type="CDD" id="cd01949">
    <property type="entry name" value="GGDEF"/>
    <property type="match status" value="1"/>
</dbReference>
<dbReference type="FunFam" id="3.30.70.270:FF:000001">
    <property type="entry name" value="Diguanylate cyclase domain protein"/>
    <property type="match status" value="1"/>
</dbReference>
<dbReference type="Gene3D" id="3.30.450.40">
    <property type="match status" value="1"/>
</dbReference>
<dbReference type="Gene3D" id="3.30.70.270">
    <property type="match status" value="1"/>
</dbReference>
<dbReference type="InterPro" id="IPR048092">
    <property type="entry name" value="Dguan_cyc_DgcA"/>
</dbReference>
<dbReference type="InterPro" id="IPR050469">
    <property type="entry name" value="Diguanylate_Cyclase"/>
</dbReference>
<dbReference type="InterPro" id="IPR029016">
    <property type="entry name" value="GAF-like_dom_sf"/>
</dbReference>
<dbReference type="InterPro" id="IPR000160">
    <property type="entry name" value="GGDEF_dom"/>
</dbReference>
<dbReference type="InterPro" id="IPR029787">
    <property type="entry name" value="Nucleotide_cyclase"/>
</dbReference>
<dbReference type="InterPro" id="IPR043128">
    <property type="entry name" value="Rev_trsase/Diguanyl_cyclase"/>
</dbReference>
<dbReference type="NCBIfam" id="NF041606">
    <property type="entry name" value="dguan_cyc_DgcA"/>
    <property type="match status" value="1"/>
</dbReference>
<dbReference type="NCBIfam" id="TIGR00254">
    <property type="entry name" value="GGDEF"/>
    <property type="match status" value="1"/>
</dbReference>
<dbReference type="PANTHER" id="PTHR45138:SF9">
    <property type="entry name" value="DIGUANYLATE CYCLASE DGCM-RELATED"/>
    <property type="match status" value="1"/>
</dbReference>
<dbReference type="PANTHER" id="PTHR45138">
    <property type="entry name" value="REGULATORY COMPONENTS OF SENSORY TRANSDUCTION SYSTEM"/>
    <property type="match status" value="1"/>
</dbReference>
<dbReference type="Pfam" id="PF00990">
    <property type="entry name" value="GGDEF"/>
    <property type="match status" value="1"/>
</dbReference>
<dbReference type="SMART" id="SM00267">
    <property type="entry name" value="GGDEF"/>
    <property type="match status" value="1"/>
</dbReference>
<dbReference type="SUPFAM" id="SSF55781">
    <property type="entry name" value="GAF domain-like"/>
    <property type="match status" value="1"/>
</dbReference>
<dbReference type="SUPFAM" id="SSF55073">
    <property type="entry name" value="Nucleotide cyclase"/>
    <property type="match status" value="1"/>
</dbReference>
<dbReference type="PROSITE" id="PS50887">
    <property type="entry name" value="GGDEF"/>
    <property type="match status" value="1"/>
</dbReference>
<reference key="1">
    <citation type="journal article" date="2004" name="Proc. Natl. Acad. Sci. U.S.A.">
        <title>Comparison of the genome of the oral pathogen Treponema denticola with other spirochete genomes.</title>
        <authorList>
            <person name="Seshadri R."/>
            <person name="Myers G.S.A."/>
            <person name="Tettelin H."/>
            <person name="Eisen J.A."/>
            <person name="Heidelberg J.F."/>
            <person name="Dodson R.J."/>
            <person name="Davidsen T.M."/>
            <person name="DeBoy R.T."/>
            <person name="Fouts D.E."/>
            <person name="Haft D.H."/>
            <person name="Selengut J."/>
            <person name="Ren Q."/>
            <person name="Brinkac L.M."/>
            <person name="Madupu R."/>
            <person name="Kolonay J.F."/>
            <person name="Durkin S.A."/>
            <person name="Daugherty S.C."/>
            <person name="Shetty J."/>
            <person name="Shvartsbeyn A."/>
            <person name="Gebregeorgis E."/>
            <person name="Geer K."/>
            <person name="Tsegaye G."/>
            <person name="Malek J.A."/>
            <person name="Ayodeji B."/>
            <person name="Shatsman S."/>
            <person name="McLeod M.P."/>
            <person name="Smajs D."/>
            <person name="Howell J.K."/>
            <person name="Pal S."/>
            <person name="Amin A."/>
            <person name="Vashisth P."/>
            <person name="McNeill T.Z."/>
            <person name="Xiang Q."/>
            <person name="Sodergren E."/>
            <person name="Baca E."/>
            <person name="Weinstock G.M."/>
            <person name="Norris S.J."/>
            <person name="Fraser C.M."/>
            <person name="Paulsen I.T."/>
        </authorList>
    </citation>
    <scope>NUCLEOTIDE SEQUENCE [LARGE SCALE GENOMIC DNA]</scope>
    <source>
        <strain>ATCC 35405 / DSM 14222 / CIP 103919 / JCM 8153 / KCTC 15104</strain>
    </source>
</reference>
<reference key="2">
    <citation type="journal article" date="2021" name="Pathog. Dis.">
        <title>The Treponema denticola DgcA protein (TDE0125) is a functional diguanylate cyclase.</title>
        <authorList>
            <person name="Patel D.T."/>
            <person name="O'Bier N.S."/>
            <person name="Schuler E.J.A."/>
            <person name="Marconi R.T."/>
        </authorList>
    </citation>
    <scope>FUNCTION</scope>
    <scope>CATALYTIC ACTIVITY</scope>
    <scope>COFACTOR</scope>
    <scope>ACTIVITY REGULATION</scope>
    <scope>SUBUNIT</scope>
    <scope>SUBCELLULAR LOCATION</scope>
    <scope>MUTAGENESIS OF ARG-273; ASP-276 AND 282-GLY-GLY-283</scope>
    <source>
        <strain>ATCC 35405 / DSM 14222 / CIP 103919 / JCM 8153 / KCTC 15104</strain>
    </source>
</reference>
<evidence type="ECO:0000250" key="1">
    <source>
        <dbReference type="UniProtKB" id="P31129"/>
    </source>
</evidence>
<evidence type="ECO:0000255" key="2"/>
<evidence type="ECO:0000255" key="3">
    <source>
        <dbReference type="PROSITE-ProRule" id="PRU00095"/>
    </source>
</evidence>
<evidence type="ECO:0000269" key="4">
    <source>
    </source>
</evidence>
<evidence type="ECO:0000303" key="5">
    <source>
    </source>
</evidence>
<evidence type="ECO:0000312" key="6">
    <source>
        <dbReference type="EMBL" id="AAS10623.1"/>
    </source>
</evidence>
<keyword id="KW-0021">Allosteric enzyme</keyword>
<keyword id="KW-0963">Cytoplasm</keyword>
<keyword id="KW-0342">GTP-binding</keyword>
<keyword id="KW-0460">Magnesium</keyword>
<keyword id="KW-0464">Manganese</keyword>
<keyword id="KW-0479">Metal-binding</keyword>
<keyword id="KW-0547">Nucleotide-binding</keyword>
<keyword id="KW-1185">Reference proteome</keyword>
<keyword id="KW-0808">Transferase</keyword>
<organism>
    <name type="scientific">Treponema denticola (strain ATCC 35405 / DSM 14222 / CIP 103919 / JCM 8153 / KCTC 15104)</name>
    <dbReference type="NCBI Taxonomy" id="243275"/>
    <lineage>
        <taxon>Bacteria</taxon>
        <taxon>Pseudomonadati</taxon>
        <taxon>Spirochaetota</taxon>
        <taxon>Spirochaetia</taxon>
        <taxon>Spirochaetales</taxon>
        <taxon>Treponemataceae</taxon>
        <taxon>Treponema</taxon>
    </lineage>
</organism>
<proteinExistence type="evidence at protein level"/>
<protein>
    <recommendedName>
        <fullName evidence="5">Diguanylate cyclase A</fullName>
        <shortName evidence="5">DGC</shortName>
        <ecNumber evidence="4">2.7.7.65</ecNumber>
    </recommendedName>
</protein>
<comment type="function">
    <text evidence="4">Catalyzes the conversion of GTP to cyclic-di-GMP (c-di-GMP). Shows activity under aerobic and anaerobic reaction conditions.</text>
</comment>
<comment type="catalytic activity">
    <reaction evidence="4">
        <text>2 GTP = 3',3'-c-di-GMP + 2 diphosphate</text>
        <dbReference type="Rhea" id="RHEA:24898"/>
        <dbReference type="ChEBI" id="CHEBI:33019"/>
        <dbReference type="ChEBI" id="CHEBI:37565"/>
        <dbReference type="ChEBI" id="CHEBI:58805"/>
        <dbReference type="EC" id="2.7.7.65"/>
    </reaction>
</comment>
<comment type="cofactor">
    <cofactor evidence="4">
        <name>Mg(2+)</name>
        <dbReference type="ChEBI" id="CHEBI:18420"/>
    </cofactor>
    <cofactor evidence="4">
        <name>Mn(2+)</name>
        <dbReference type="ChEBI" id="CHEBI:29035"/>
    </cofactor>
    <text evidence="4">Shows higher activity with Mn(2+) than Mg(2+).</text>
</comment>
<comment type="activity regulation">
    <text evidence="4">Allosterically regulated by a feedback inhibition loop.</text>
</comment>
<comment type="subunit">
    <text evidence="4">Exists as a homodimer and as larger aggregates. Both dimers and aggregates possess DGC activity.</text>
</comment>
<comment type="subcellular location">
    <subcellularLocation>
        <location evidence="4">Cytoplasm</location>
    </subcellularLocation>
</comment>
<sequence>MKTTPNEKLLKKALHSCNNKKYADKILHQEKEIFDLKQLLQISKSLNSVLEFDRLIEAILYIVMAQLKTLGAAIFTKKSFDDNLFVLNRDHYGFDIIRDAQYSINVDHPLINFLDKSDSGCTPDEISKNIKTDKIVKDLFSLSPSFFVPLKAKNRMIGFLLLGEKMESSHQFTDYEKNIIENIASLAAIAINNSQLLEMTTTDIMTHLKLKHYFFTLLMEHLYTINSSGEKKETLSILMIDIDFFKNINDTYGHAAGDIVLEEVAKIIKSCTRNADTAARYGGEEFIVMLNNTSASAAMAVAERIRKSVEEKSIMYDGKKINVTISIGVSSYNFDLESAKSIVERADKALYESKQNGRNRVTLSKNNLPKA</sequence>
<accession>Q73RG3</accession>
<feature type="chain" id="PRO_0000453204" description="Diguanylate cyclase A">
    <location>
        <begin position="1"/>
        <end position="371"/>
    </location>
</feature>
<feature type="domain" description="GGDEF" evidence="3">
    <location>
        <begin position="233"/>
        <end position="366"/>
    </location>
</feature>
<feature type="active site" description="Proton acceptor" evidence="2">
    <location>
        <position position="284"/>
    </location>
</feature>
<feature type="binding site" evidence="1">
    <location>
        <position position="241"/>
    </location>
    <ligand>
        <name>Mg(2+)</name>
        <dbReference type="ChEBI" id="CHEBI:18420"/>
    </ligand>
</feature>
<feature type="binding site" evidence="1">
    <location>
        <position position="242"/>
    </location>
    <ligand>
        <name>Mg(2+)</name>
        <dbReference type="ChEBI" id="CHEBI:18420"/>
    </ligand>
</feature>
<feature type="binding site" evidence="1">
    <location>
        <position position="284"/>
    </location>
    <ligand>
        <name>Mg(2+)</name>
        <dbReference type="ChEBI" id="CHEBI:18420"/>
    </ligand>
</feature>
<feature type="site" description="Transition state stabilizer" evidence="2">
    <location>
        <position position="246"/>
    </location>
</feature>
<feature type="mutagenesis site" description="Forms dimers and tetramers and shows enhanced activity; when associated with A-276." evidence="4">
    <original>R</original>
    <variation>A</variation>
    <location>
        <position position="273"/>
    </location>
</feature>
<feature type="mutagenesis site" description="Forms dimers and tetramers and shows enhanced activity; when associated with A-273." evidence="4">
    <original>D</original>
    <variation>A</variation>
    <location>
        <position position="276"/>
    </location>
</feature>
<feature type="mutagenesis site" description="Loss of activity. Forms exclusively large aggregates." evidence="4">
    <original>GG</original>
    <variation>AA</variation>
    <location>
        <begin position="282"/>
        <end position="283"/>
    </location>
</feature>
<name>DGCA_TREDE</name>
<gene>
    <name evidence="5" type="primary">dgcA</name>
    <name evidence="6" type="ordered locus">TDE_0125</name>
</gene>